<gene>
    <name evidence="1" type="primary">infC</name>
    <name type="ordered locus">SP70585_0999</name>
</gene>
<reference key="1">
    <citation type="journal article" date="2010" name="Genome Biol.">
        <title>Structure and dynamics of the pan-genome of Streptococcus pneumoniae and closely related species.</title>
        <authorList>
            <person name="Donati C."/>
            <person name="Hiller N.L."/>
            <person name="Tettelin H."/>
            <person name="Muzzi A."/>
            <person name="Croucher N.J."/>
            <person name="Angiuoli S.V."/>
            <person name="Oggioni M."/>
            <person name="Dunning Hotopp J.C."/>
            <person name="Hu F.Z."/>
            <person name="Riley D.R."/>
            <person name="Covacci A."/>
            <person name="Mitchell T.J."/>
            <person name="Bentley S.D."/>
            <person name="Kilian M."/>
            <person name="Ehrlich G.D."/>
            <person name="Rappuoli R."/>
            <person name="Moxon E.R."/>
            <person name="Masignani V."/>
        </authorList>
    </citation>
    <scope>NUCLEOTIDE SEQUENCE [LARGE SCALE GENOMIC DNA]</scope>
    <source>
        <strain>70585</strain>
    </source>
</reference>
<comment type="function">
    <text evidence="1">IF-3 binds to the 30S ribosomal subunit and shifts the equilibrium between 70S ribosomes and their 50S and 30S subunits in favor of the free subunits, thus enhancing the availability of 30S subunits on which protein synthesis initiation begins.</text>
</comment>
<comment type="subunit">
    <text evidence="1">Monomer.</text>
</comment>
<comment type="subcellular location">
    <subcellularLocation>
        <location evidence="1">Cytoplasm</location>
    </subcellularLocation>
</comment>
<comment type="similarity">
    <text evidence="1">Belongs to the IF-3 family.</text>
</comment>
<evidence type="ECO:0000255" key="1">
    <source>
        <dbReference type="HAMAP-Rule" id="MF_00080"/>
    </source>
</evidence>
<organism>
    <name type="scientific">Streptococcus pneumoniae (strain 70585)</name>
    <dbReference type="NCBI Taxonomy" id="488221"/>
    <lineage>
        <taxon>Bacteria</taxon>
        <taxon>Bacillati</taxon>
        <taxon>Bacillota</taxon>
        <taxon>Bacilli</taxon>
        <taxon>Lactobacillales</taxon>
        <taxon>Streptococcaceae</taxon>
        <taxon>Streptococcus</taxon>
    </lineage>
</organism>
<protein>
    <recommendedName>
        <fullName evidence="1">Translation initiation factor IF-3</fullName>
    </recommendedName>
</protein>
<sequence length="185" mass="21165">MFFSNKTKEVKTIAKQDLFINDEIRVREVRLIGLEGEQLGIKPLSEAQALADNANVDLVLIQPQAKPPVAKIMDYGKFKFEYQKKQKEQRKKQSVVTVKEVRLSPTIDKGDFDTKLRNARKFLEKGNKVKVSIRFKGRMITHKEIGAKVLAEFAEATQDIAIIEQRAKMDGRQMFMQLAPATDKK</sequence>
<name>IF3_STRP7</name>
<accession>C1C6T6</accession>
<feature type="chain" id="PRO_1000190844" description="Translation initiation factor IF-3">
    <location>
        <begin position="1"/>
        <end position="185"/>
    </location>
</feature>
<proteinExistence type="inferred from homology"/>
<dbReference type="EMBL" id="CP000918">
    <property type="protein sequence ID" value="ACO16759.1"/>
    <property type="molecule type" value="Genomic_DNA"/>
</dbReference>
<dbReference type="SMR" id="C1C6T6"/>
<dbReference type="KEGG" id="snm:SP70585_0999"/>
<dbReference type="HOGENOM" id="CLU_054919_3_2_9"/>
<dbReference type="Proteomes" id="UP000002211">
    <property type="component" value="Chromosome"/>
</dbReference>
<dbReference type="GO" id="GO:0005829">
    <property type="term" value="C:cytosol"/>
    <property type="evidence" value="ECO:0007669"/>
    <property type="project" value="TreeGrafter"/>
</dbReference>
<dbReference type="GO" id="GO:0016020">
    <property type="term" value="C:membrane"/>
    <property type="evidence" value="ECO:0007669"/>
    <property type="project" value="TreeGrafter"/>
</dbReference>
<dbReference type="GO" id="GO:0043022">
    <property type="term" value="F:ribosome binding"/>
    <property type="evidence" value="ECO:0007669"/>
    <property type="project" value="TreeGrafter"/>
</dbReference>
<dbReference type="GO" id="GO:0003743">
    <property type="term" value="F:translation initiation factor activity"/>
    <property type="evidence" value="ECO:0007669"/>
    <property type="project" value="UniProtKB-UniRule"/>
</dbReference>
<dbReference type="GO" id="GO:0032790">
    <property type="term" value="P:ribosome disassembly"/>
    <property type="evidence" value="ECO:0007669"/>
    <property type="project" value="TreeGrafter"/>
</dbReference>
<dbReference type="FunFam" id="3.10.20.80:FF:000001">
    <property type="entry name" value="Translation initiation factor IF-3"/>
    <property type="match status" value="1"/>
</dbReference>
<dbReference type="FunFam" id="3.30.110.10:FF:000001">
    <property type="entry name" value="Translation initiation factor IF-3"/>
    <property type="match status" value="1"/>
</dbReference>
<dbReference type="Gene3D" id="3.30.110.10">
    <property type="entry name" value="Translation initiation factor 3 (IF-3), C-terminal domain"/>
    <property type="match status" value="1"/>
</dbReference>
<dbReference type="Gene3D" id="3.10.20.80">
    <property type="entry name" value="Translation initiation factor 3 (IF-3), N-terminal domain"/>
    <property type="match status" value="1"/>
</dbReference>
<dbReference type="HAMAP" id="MF_00080">
    <property type="entry name" value="IF_3"/>
    <property type="match status" value="1"/>
</dbReference>
<dbReference type="InterPro" id="IPR036788">
    <property type="entry name" value="T_IF-3_C_sf"/>
</dbReference>
<dbReference type="InterPro" id="IPR036787">
    <property type="entry name" value="T_IF-3_N_sf"/>
</dbReference>
<dbReference type="InterPro" id="IPR019813">
    <property type="entry name" value="Translation_initiation_fac3_CS"/>
</dbReference>
<dbReference type="InterPro" id="IPR001288">
    <property type="entry name" value="Translation_initiation_fac_3"/>
</dbReference>
<dbReference type="InterPro" id="IPR019815">
    <property type="entry name" value="Translation_initiation_fac_3_C"/>
</dbReference>
<dbReference type="InterPro" id="IPR019814">
    <property type="entry name" value="Translation_initiation_fac_3_N"/>
</dbReference>
<dbReference type="NCBIfam" id="TIGR00168">
    <property type="entry name" value="infC"/>
    <property type="match status" value="1"/>
</dbReference>
<dbReference type="PANTHER" id="PTHR10938">
    <property type="entry name" value="TRANSLATION INITIATION FACTOR IF-3"/>
    <property type="match status" value="1"/>
</dbReference>
<dbReference type="PANTHER" id="PTHR10938:SF0">
    <property type="entry name" value="TRANSLATION INITIATION FACTOR IF-3, MITOCHONDRIAL"/>
    <property type="match status" value="1"/>
</dbReference>
<dbReference type="Pfam" id="PF00707">
    <property type="entry name" value="IF3_C"/>
    <property type="match status" value="1"/>
</dbReference>
<dbReference type="Pfam" id="PF05198">
    <property type="entry name" value="IF3_N"/>
    <property type="match status" value="1"/>
</dbReference>
<dbReference type="SUPFAM" id="SSF55200">
    <property type="entry name" value="Translation initiation factor IF3, C-terminal domain"/>
    <property type="match status" value="1"/>
</dbReference>
<dbReference type="SUPFAM" id="SSF54364">
    <property type="entry name" value="Translation initiation factor IF3, N-terminal domain"/>
    <property type="match status" value="1"/>
</dbReference>
<dbReference type="PROSITE" id="PS00938">
    <property type="entry name" value="IF3"/>
    <property type="match status" value="1"/>
</dbReference>
<keyword id="KW-0963">Cytoplasm</keyword>
<keyword id="KW-0396">Initiation factor</keyword>
<keyword id="KW-0648">Protein biosynthesis</keyword>